<evidence type="ECO:0000255" key="1">
    <source>
        <dbReference type="HAMAP-Rule" id="MF_00006"/>
    </source>
</evidence>
<sequence>MAEHKPWDGRFAEKTDDMVEAFTSSIQVDKRLYAHDITGSIAHARTLAEAGVITSDEADAMEKGLRQVKGEIEAGNFKYDDSLEDIHMHIESRLTEILGPTAAKLHTGRSRNDQIALDNRLYLRDETRRIIAMLHELRQAIVDSAQAHLDYFVPGYTHLQRAQPVLLSHHLMAYYEMFTRDSDRFTDALYRINVMPLGSAALAGTTFPLDREYTASLLGFEGVTQNSMDAVSDRDFIMEFLSDASICMVHLSRMSEELVLWSSSEFAFLNMPDAFATGSSIMPQKKNPDVPELVRGKTGRVVGSLMAILTTMKSLPMAYNRDMQEDKPPLFDAVDTLKACVAMFARMVPKLEFNRRNMFDASNQGFLNATDMADYLVEKGVPFREAHGIVGRAVAYALDRGRELHEISLNDLRKFSDKLEKDLYEALTVEHVVERRRTIGGTASVNVIAAIGRAQTQLQAETSGD</sequence>
<gene>
    <name evidence="1" type="primary">argH</name>
    <name type="ordered locus">Dalk_0410</name>
</gene>
<reference key="1">
    <citation type="journal article" date="2012" name="Environ. Microbiol.">
        <title>The genome sequence of Desulfatibacillum alkenivorans AK-01: a blueprint for anaerobic alkane oxidation.</title>
        <authorList>
            <person name="Callaghan A.V."/>
            <person name="Morris B.E."/>
            <person name="Pereira I.A."/>
            <person name="McInerney M.J."/>
            <person name="Austin R.N."/>
            <person name="Groves J.T."/>
            <person name="Kukor J.J."/>
            <person name="Suflita J.M."/>
            <person name="Young L.Y."/>
            <person name="Zylstra G.J."/>
            <person name="Wawrik B."/>
        </authorList>
    </citation>
    <scope>NUCLEOTIDE SEQUENCE [LARGE SCALE GENOMIC DNA]</scope>
    <source>
        <strain>AK-01</strain>
    </source>
</reference>
<proteinExistence type="inferred from homology"/>
<accession>B8FH31</accession>
<keyword id="KW-0028">Amino-acid biosynthesis</keyword>
<keyword id="KW-0055">Arginine biosynthesis</keyword>
<keyword id="KW-0963">Cytoplasm</keyword>
<keyword id="KW-0456">Lyase</keyword>
<keyword id="KW-1185">Reference proteome</keyword>
<protein>
    <recommendedName>
        <fullName evidence="1">Argininosuccinate lyase</fullName>
        <shortName evidence="1">ASAL</shortName>
        <ecNumber evidence="1">4.3.2.1</ecNumber>
    </recommendedName>
    <alternativeName>
        <fullName evidence="1">Arginosuccinase</fullName>
    </alternativeName>
</protein>
<organism>
    <name type="scientific">Desulfatibacillum aliphaticivorans</name>
    <dbReference type="NCBI Taxonomy" id="218208"/>
    <lineage>
        <taxon>Bacteria</taxon>
        <taxon>Pseudomonadati</taxon>
        <taxon>Thermodesulfobacteriota</taxon>
        <taxon>Desulfobacteria</taxon>
        <taxon>Desulfobacterales</taxon>
        <taxon>Desulfatibacillaceae</taxon>
        <taxon>Desulfatibacillum</taxon>
    </lineage>
</organism>
<dbReference type="EC" id="4.3.2.1" evidence="1"/>
<dbReference type="EMBL" id="CP001322">
    <property type="protein sequence ID" value="ACL02119.1"/>
    <property type="molecule type" value="Genomic_DNA"/>
</dbReference>
<dbReference type="RefSeq" id="WP_012609559.1">
    <property type="nucleotide sequence ID" value="NC_011768.1"/>
</dbReference>
<dbReference type="SMR" id="B8FH31"/>
<dbReference type="KEGG" id="dal:Dalk_0410"/>
<dbReference type="eggNOG" id="COG0165">
    <property type="taxonomic scope" value="Bacteria"/>
</dbReference>
<dbReference type="HOGENOM" id="CLU_027272_2_3_7"/>
<dbReference type="UniPathway" id="UPA00068">
    <property type="reaction ID" value="UER00114"/>
</dbReference>
<dbReference type="Proteomes" id="UP000000739">
    <property type="component" value="Chromosome"/>
</dbReference>
<dbReference type="GO" id="GO:0005829">
    <property type="term" value="C:cytosol"/>
    <property type="evidence" value="ECO:0007669"/>
    <property type="project" value="TreeGrafter"/>
</dbReference>
<dbReference type="GO" id="GO:0004056">
    <property type="term" value="F:argininosuccinate lyase activity"/>
    <property type="evidence" value="ECO:0007669"/>
    <property type="project" value="UniProtKB-UniRule"/>
</dbReference>
<dbReference type="GO" id="GO:0042450">
    <property type="term" value="P:arginine biosynthetic process via ornithine"/>
    <property type="evidence" value="ECO:0007669"/>
    <property type="project" value="InterPro"/>
</dbReference>
<dbReference type="GO" id="GO:0006526">
    <property type="term" value="P:L-arginine biosynthetic process"/>
    <property type="evidence" value="ECO:0007669"/>
    <property type="project" value="UniProtKB-UniRule"/>
</dbReference>
<dbReference type="CDD" id="cd01359">
    <property type="entry name" value="Argininosuccinate_lyase"/>
    <property type="match status" value="1"/>
</dbReference>
<dbReference type="FunFam" id="1.10.275.10:FF:000002">
    <property type="entry name" value="Argininosuccinate lyase"/>
    <property type="match status" value="1"/>
</dbReference>
<dbReference type="FunFam" id="1.10.40.30:FF:000001">
    <property type="entry name" value="Argininosuccinate lyase"/>
    <property type="match status" value="1"/>
</dbReference>
<dbReference type="FunFam" id="1.20.200.10:FF:000015">
    <property type="entry name" value="argininosuccinate lyase isoform X2"/>
    <property type="match status" value="1"/>
</dbReference>
<dbReference type="Gene3D" id="1.10.40.30">
    <property type="entry name" value="Fumarase/aspartase (C-terminal domain)"/>
    <property type="match status" value="1"/>
</dbReference>
<dbReference type="Gene3D" id="1.20.200.10">
    <property type="entry name" value="Fumarase/aspartase (Central domain)"/>
    <property type="match status" value="1"/>
</dbReference>
<dbReference type="Gene3D" id="1.10.275.10">
    <property type="entry name" value="Fumarase/aspartase (N-terminal domain)"/>
    <property type="match status" value="1"/>
</dbReference>
<dbReference type="HAMAP" id="MF_00006">
    <property type="entry name" value="Arg_succ_lyase"/>
    <property type="match status" value="1"/>
</dbReference>
<dbReference type="InterPro" id="IPR029419">
    <property type="entry name" value="Arg_succ_lyase_C"/>
</dbReference>
<dbReference type="InterPro" id="IPR009049">
    <property type="entry name" value="Argininosuccinate_lyase"/>
</dbReference>
<dbReference type="InterPro" id="IPR024083">
    <property type="entry name" value="Fumarase/histidase_N"/>
</dbReference>
<dbReference type="InterPro" id="IPR020557">
    <property type="entry name" value="Fumarate_lyase_CS"/>
</dbReference>
<dbReference type="InterPro" id="IPR000362">
    <property type="entry name" value="Fumarate_lyase_fam"/>
</dbReference>
<dbReference type="InterPro" id="IPR022761">
    <property type="entry name" value="Fumarate_lyase_N"/>
</dbReference>
<dbReference type="InterPro" id="IPR008948">
    <property type="entry name" value="L-Aspartase-like"/>
</dbReference>
<dbReference type="NCBIfam" id="TIGR00838">
    <property type="entry name" value="argH"/>
    <property type="match status" value="1"/>
</dbReference>
<dbReference type="PANTHER" id="PTHR43814">
    <property type="entry name" value="ARGININOSUCCINATE LYASE"/>
    <property type="match status" value="1"/>
</dbReference>
<dbReference type="PANTHER" id="PTHR43814:SF1">
    <property type="entry name" value="ARGININOSUCCINATE LYASE"/>
    <property type="match status" value="1"/>
</dbReference>
<dbReference type="Pfam" id="PF14698">
    <property type="entry name" value="ASL_C2"/>
    <property type="match status" value="1"/>
</dbReference>
<dbReference type="Pfam" id="PF00206">
    <property type="entry name" value="Lyase_1"/>
    <property type="match status" value="1"/>
</dbReference>
<dbReference type="PRINTS" id="PR00145">
    <property type="entry name" value="ARGSUCLYASE"/>
</dbReference>
<dbReference type="PRINTS" id="PR00149">
    <property type="entry name" value="FUMRATELYASE"/>
</dbReference>
<dbReference type="SUPFAM" id="SSF48557">
    <property type="entry name" value="L-aspartase-like"/>
    <property type="match status" value="1"/>
</dbReference>
<dbReference type="PROSITE" id="PS00163">
    <property type="entry name" value="FUMARATE_LYASES"/>
    <property type="match status" value="1"/>
</dbReference>
<comment type="catalytic activity">
    <reaction evidence="1">
        <text>2-(N(omega)-L-arginino)succinate = fumarate + L-arginine</text>
        <dbReference type="Rhea" id="RHEA:24020"/>
        <dbReference type="ChEBI" id="CHEBI:29806"/>
        <dbReference type="ChEBI" id="CHEBI:32682"/>
        <dbReference type="ChEBI" id="CHEBI:57472"/>
        <dbReference type="EC" id="4.3.2.1"/>
    </reaction>
</comment>
<comment type="pathway">
    <text evidence="1">Amino-acid biosynthesis; L-arginine biosynthesis; L-arginine from L-ornithine and carbamoyl phosphate: step 3/3.</text>
</comment>
<comment type="subcellular location">
    <subcellularLocation>
        <location evidence="1">Cytoplasm</location>
    </subcellularLocation>
</comment>
<comment type="similarity">
    <text evidence="1">Belongs to the lyase 1 family. Argininosuccinate lyase subfamily.</text>
</comment>
<feature type="chain" id="PRO_1000116202" description="Argininosuccinate lyase">
    <location>
        <begin position="1"/>
        <end position="465"/>
    </location>
</feature>
<name>ARLY_DESAL</name>